<comment type="function">
    <text evidence="1">Located on the platform of the 30S subunit, it bridges several disparate RNA helices of the 16S rRNA. Forms part of the Shine-Dalgarno cleft in the 70S ribosome.</text>
</comment>
<comment type="subunit">
    <text evidence="1">Part of the 30S ribosomal subunit. Interacts with proteins S7 and S18. Binds to IF-3.</text>
</comment>
<comment type="similarity">
    <text evidence="1">Belongs to the universal ribosomal protein uS11 family.</text>
</comment>
<accession>B9L6T9</accession>
<keyword id="KW-0687">Ribonucleoprotein</keyword>
<keyword id="KW-0689">Ribosomal protein</keyword>
<keyword id="KW-0694">RNA-binding</keyword>
<keyword id="KW-0699">rRNA-binding</keyword>
<feature type="chain" id="PRO_1000165560" description="Small ribosomal subunit protein uS11">
    <location>
        <begin position="1"/>
        <end position="130"/>
    </location>
</feature>
<name>RS11_NAUPA</name>
<dbReference type="EMBL" id="CP001279">
    <property type="protein sequence ID" value="ACM92515.1"/>
    <property type="molecule type" value="Genomic_DNA"/>
</dbReference>
<dbReference type="RefSeq" id="WP_012663886.1">
    <property type="nucleotide sequence ID" value="NC_012115.1"/>
</dbReference>
<dbReference type="SMR" id="B9L6T9"/>
<dbReference type="STRING" id="598659.NAMH_1697"/>
<dbReference type="KEGG" id="nam:NAMH_1697"/>
<dbReference type="eggNOG" id="COG0100">
    <property type="taxonomic scope" value="Bacteria"/>
</dbReference>
<dbReference type="HOGENOM" id="CLU_072439_5_0_7"/>
<dbReference type="OrthoDB" id="9806415at2"/>
<dbReference type="Proteomes" id="UP000000448">
    <property type="component" value="Chromosome"/>
</dbReference>
<dbReference type="GO" id="GO:1990904">
    <property type="term" value="C:ribonucleoprotein complex"/>
    <property type="evidence" value="ECO:0007669"/>
    <property type="project" value="UniProtKB-KW"/>
</dbReference>
<dbReference type="GO" id="GO:0005840">
    <property type="term" value="C:ribosome"/>
    <property type="evidence" value="ECO:0007669"/>
    <property type="project" value="UniProtKB-KW"/>
</dbReference>
<dbReference type="GO" id="GO:0019843">
    <property type="term" value="F:rRNA binding"/>
    <property type="evidence" value="ECO:0007669"/>
    <property type="project" value="UniProtKB-UniRule"/>
</dbReference>
<dbReference type="GO" id="GO:0003735">
    <property type="term" value="F:structural constituent of ribosome"/>
    <property type="evidence" value="ECO:0007669"/>
    <property type="project" value="InterPro"/>
</dbReference>
<dbReference type="GO" id="GO:0006412">
    <property type="term" value="P:translation"/>
    <property type="evidence" value="ECO:0007669"/>
    <property type="project" value="UniProtKB-UniRule"/>
</dbReference>
<dbReference type="FunFam" id="3.30.420.80:FF:000001">
    <property type="entry name" value="30S ribosomal protein S11"/>
    <property type="match status" value="1"/>
</dbReference>
<dbReference type="Gene3D" id="3.30.420.80">
    <property type="entry name" value="Ribosomal protein S11"/>
    <property type="match status" value="1"/>
</dbReference>
<dbReference type="HAMAP" id="MF_01310">
    <property type="entry name" value="Ribosomal_uS11"/>
    <property type="match status" value="1"/>
</dbReference>
<dbReference type="InterPro" id="IPR001971">
    <property type="entry name" value="Ribosomal_uS11"/>
</dbReference>
<dbReference type="InterPro" id="IPR019981">
    <property type="entry name" value="Ribosomal_uS11_bac-type"/>
</dbReference>
<dbReference type="InterPro" id="IPR036967">
    <property type="entry name" value="Ribosomal_uS11_sf"/>
</dbReference>
<dbReference type="NCBIfam" id="NF003698">
    <property type="entry name" value="PRK05309.1"/>
    <property type="match status" value="1"/>
</dbReference>
<dbReference type="NCBIfam" id="TIGR03632">
    <property type="entry name" value="uS11_bact"/>
    <property type="match status" value="1"/>
</dbReference>
<dbReference type="PANTHER" id="PTHR11759">
    <property type="entry name" value="40S RIBOSOMAL PROTEIN S14/30S RIBOSOMAL PROTEIN S11"/>
    <property type="match status" value="1"/>
</dbReference>
<dbReference type="Pfam" id="PF00411">
    <property type="entry name" value="Ribosomal_S11"/>
    <property type="match status" value="1"/>
</dbReference>
<dbReference type="PIRSF" id="PIRSF002131">
    <property type="entry name" value="Ribosomal_S11"/>
    <property type="match status" value="1"/>
</dbReference>
<dbReference type="SUPFAM" id="SSF53137">
    <property type="entry name" value="Translational machinery components"/>
    <property type="match status" value="1"/>
</dbReference>
<reference key="1">
    <citation type="journal article" date="2009" name="PLoS Genet.">
        <title>Adaptations to submarine hydrothermal environments exemplified by the genome of Nautilia profundicola.</title>
        <authorList>
            <person name="Campbell B.J."/>
            <person name="Smith J.L."/>
            <person name="Hanson T.E."/>
            <person name="Klotz M.G."/>
            <person name="Stein L.Y."/>
            <person name="Lee C.K."/>
            <person name="Wu D."/>
            <person name="Robinson J.M."/>
            <person name="Khouri H.M."/>
            <person name="Eisen J.A."/>
            <person name="Cary S.C."/>
        </authorList>
    </citation>
    <scope>NUCLEOTIDE SEQUENCE [LARGE SCALE GENOMIC DNA]</scope>
    <source>
        <strain>ATCC BAA-1463 / DSM 18972 / AmH</strain>
    </source>
</reference>
<sequence length="130" mass="14104">MAKRKVTKKKKIKKQVGRGVVYISATFNNTMITVTDEMGNALCWSSAGALGFKGSKKSTPFAAQQAVEDVMAKAKEYGIKEVGIKVQGPGGGRETAVKTVGAIEGIKVLWMKDVTPLPHNGCRPRKRRRV</sequence>
<organism>
    <name type="scientific">Nautilia profundicola (strain ATCC BAA-1463 / DSM 18972 / AmH)</name>
    <dbReference type="NCBI Taxonomy" id="598659"/>
    <lineage>
        <taxon>Bacteria</taxon>
        <taxon>Pseudomonadati</taxon>
        <taxon>Campylobacterota</taxon>
        <taxon>Epsilonproteobacteria</taxon>
        <taxon>Nautiliales</taxon>
        <taxon>Nautiliaceae</taxon>
        <taxon>Nautilia</taxon>
    </lineage>
</organism>
<gene>
    <name evidence="1" type="primary">rpsK</name>
    <name type="ordered locus">NAMH_1697</name>
</gene>
<protein>
    <recommendedName>
        <fullName evidence="1">Small ribosomal subunit protein uS11</fullName>
    </recommendedName>
    <alternativeName>
        <fullName evidence="2">30S ribosomal protein S11</fullName>
    </alternativeName>
</protein>
<evidence type="ECO:0000255" key="1">
    <source>
        <dbReference type="HAMAP-Rule" id="MF_01310"/>
    </source>
</evidence>
<evidence type="ECO:0000305" key="2"/>
<proteinExistence type="inferred from homology"/>